<comment type="function">
    <text evidence="1">Nucleotidase with a broad substrate specificity as it can dephosphorylate various ribo- and deoxyribonucleoside 5'-monophosphates and ribonucleoside 3'-monophosphates with highest affinity to 3'-AMP. Also hydrolyzes polyphosphate (exopolyphosphatase activity) with the preference for short-chain-length substrates (P20-25). Might be involved in the regulation of dNTP and NTP pools, and in the turnover of 3'-mononucleotides produced by numerous intracellular RNases (T1, T2, and F) during the degradation of various RNAs.</text>
</comment>
<comment type="catalytic activity">
    <reaction evidence="1">
        <text>a ribonucleoside 5'-phosphate + H2O = a ribonucleoside + phosphate</text>
        <dbReference type="Rhea" id="RHEA:12484"/>
        <dbReference type="ChEBI" id="CHEBI:15377"/>
        <dbReference type="ChEBI" id="CHEBI:18254"/>
        <dbReference type="ChEBI" id="CHEBI:43474"/>
        <dbReference type="ChEBI" id="CHEBI:58043"/>
        <dbReference type="EC" id="3.1.3.5"/>
    </reaction>
</comment>
<comment type="catalytic activity">
    <reaction evidence="1">
        <text>a ribonucleoside 3'-phosphate + H2O = a ribonucleoside + phosphate</text>
        <dbReference type="Rhea" id="RHEA:10144"/>
        <dbReference type="ChEBI" id="CHEBI:13197"/>
        <dbReference type="ChEBI" id="CHEBI:15377"/>
        <dbReference type="ChEBI" id="CHEBI:18254"/>
        <dbReference type="ChEBI" id="CHEBI:43474"/>
        <dbReference type="EC" id="3.1.3.6"/>
    </reaction>
</comment>
<comment type="catalytic activity">
    <reaction evidence="1">
        <text>[phosphate](n) + H2O = [phosphate](n-1) + phosphate + H(+)</text>
        <dbReference type="Rhea" id="RHEA:21528"/>
        <dbReference type="Rhea" id="RHEA-COMP:9859"/>
        <dbReference type="Rhea" id="RHEA-COMP:14279"/>
        <dbReference type="ChEBI" id="CHEBI:15377"/>
        <dbReference type="ChEBI" id="CHEBI:15378"/>
        <dbReference type="ChEBI" id="CHEBI:16838"/>
        <dbReference type="ChEBI" id="CHEBI:43474"/>
        <dbReference type="EC" id="3.6.1.11"/>
    </reaction>
</comment>
<comment type="cofactor">
    <cofactor evidence="1">
        <name>a divalent metal cation</name>
        <dbReference type="ChEBI" id="CHEBI:60240"/>
    </cofactor>
    <text evidence="1">Binds 1 divalent metal cation per subunit.</text>
</comment>
<comment type="subcellular location">
    <subcellularLocation>
        <location evidence="1">Cytoplasm</location>
    </subcellularLocation>
</comment>
<comment type="similarity">
    <text evidence="1">Belongs to the SurE nucleotidase family.</text>
</comment>
<gene>
    <name evidence="1" type="primary">surE</name>
    <name type="ordered locus">ECS88_3014</name>
</gene>
<reference key="1">
    <citation type="journal article" date="2009" name="PLoS Genet.">
        <title>Organised genome dynamics in the Escherichia coli species results in highly diverse adaptive paths.</title>
        <authorList>
            <person name="Touchon M."/>
            <person name="Hoede C."/>
            <person name="Tenaillon O."/>
            <person name="Barbe V."/>
            <person name="Baeriswyl S."/>
            <person name="Bidet P."/>
            <person name="Bingen E."/>
            <person name="Bonacorsi S."/>
            <person name="Bouchier C."/>
            <person name="Bouvet O."/>
            <person name="Calteau A."/>
            <person name="Chiapello H."/>
            <person name="Clermont O."/>
            <person name="Cruveiller S."/>
            <person name="Danchin A."/>
            <person name="Diard M."/>
            <person name="Dossat C."/>
            <person name="Karoui M.E."/>
            <person name="Frapy E."/>
            <person name="Garry L."/>
            <person name="Ghigo J.M."/>
            <person name="Gilles A.M."/>
            <person name="Johnson J."/>
            <person name="Le Bouguenec C."/>
            <person name="Lescat M."/>
            <person name="Mangenot S."/>
            <person name="Martinez-Jehanne V."/>
            <person name="Matic I."/>
            <person name="Nassif X."/>
            <person name="Oztas S."/>
            <person name="Petit M.A."/>
            <person name="Pichon C."/>
            <person name="Rouy Z."/>
            <person name="Ruf C.S."/>
            <person name="Schneider D."/>
            <person name="Tourret J."/>
            <person name="Vacherie B."/>
            <person name="Vallenet D."/>
            <person name="Medigue C."/>
            <person name="Rocha E.P.C."/>
            <person name="Denamur E."/>
        </authorList>
    </citation>
    <scope>NUCLEOTIDE SEQUENCE [LARGE SCALE GENOMIC DNA]</scope>
    <source>
        <strain>S88 / ExPEC</strain>
    </source>
</reference>
<organism>
    <name type="scientific">Escherichia coli O45:K1 (strain S88 / ExPEC)</name>
    <dbReference type="NCBI Taxonomy" id="585035"/>
    <lineage>
        <taxon>Bacteria</taxon>
        <taxon>Pseudomonadati</taxon>
        <taxon>Pseudomonadota</taxon>
        <taxon>Gammaproteobacteria</taxon>
        <taxon>Enterobacterales</taxon>
        <taxon>Enterobacteriaceae</taxon>
        <taxon>Escherichia</taxon>
    </lineage>
</organism>
<proteinExistence type="inferred from homology"/>
<dbReference type="EC" id="3.1.3.5" evidence="1"/>
<dbReference type="EC" id="3.1.3.6" evidence="1"/>
<dbReference type="EC" id="3.6.1.11" evidence="1"/>
<dbReference type="EMBL" id="CU928161">
    <property type="protein sequence ID" value="CAR04259.1"/>
    <property type="molecule type" value="Genomic_DNA"/>
</dbReference>
<dbReference type="RefSeq" id="WP_001295182.1">
    <property type="nucleotide sequence ID" value="NC_011742.1"/>
</dbReference>
<dbReference type="SMR" id="B7MKL8"/>
<dbReference type="GeneID" id="93779262"/>
<dbReference type="KEGG" id="ecz:ECS88_3014"/>
<dbReference type="HOGENOM" id="CLU_045192_1_2_6"/>
<dbReference type="Proteomes" id="UP000000747">
    <property type="component" value="Chromosome"/>
</dbReference>
<dbReference type="GO" id="GO:0005737">
    <property type="term" value="C:cytoplasm"/>
    <property type="evidence" value="ECO:0007669"/>
    <property type="project" value="UniProtKB-SubCell"/>
</dbReference>
<dbReference type="GO" id="GO:0008254">
    <property type="term" value="F:3'-nucleotidase activity"/>
    <property type="evidence" value="ECO:0007669"/>
    <property type="project" value="UniProtKB-UniRule"/>
</dbReference>
<dbReference type="GO" id="GO:0008253">
    <property type="term" value="F:5'-nucleotidase activity"/>
    <property type="evidence" value="ECO:0007669"/>
    <property type="project" value="UniProtKB-UniRule"/>
</dbReference>
<dbReference type="GO" id="GO:0004309">
    <property type="term" value="F:exopolyphosphatase activity"/>
    <property type="evidence" value="ECO:0007669"/>
    <property type="project" value="UniProtKB-UniRule"/>
</dbReference>
<dbReference type="GO" id="GO:0046872">
    <property type="term" value="F:metal ion binding"/>
    <property type="evidence" value="ECO:0007669"/>
    <property type="project" value="UniProtKB-UniRule"/>
</dbReference>
<dbReference type="GO" id="GO:0000166">
    <property type="term" value="F:nucleotide binding"/>
    <property type="evidence" value="ECO:0007669"/>
    <property type="project" value="UniProtKB-KW"/>
</dbReference>
<dbReference type="FunFam" id="3.40.1210.10:FF:000001">
    <property type="entry name" value="5'/3'-nucleotidase SurE"/>
    <property type="match status" value="1"/>
</dbReference>
<dbReference type="Gene3D" id="3.40.1210.10">
    <property type="entry name" value="Survival protein SurE-like phosphatase/nucleotidase"/>
    <property type="match status" value="1"/>
</dbReference>
<dbReference type="HAMAP" id="MF_00060">
    <property type="entry name" value="SurE"/>
    <property type="match status" value="1"/>
</dbReference>
<dbReference type="InterPro" id="IPR030048">
    <property type="entry name" value="SurE"/>
</dbReference>
<dbReference type="InterPro" id="IPR002828">
    <property type="entry name" value="SurE-like_Pase/nucleotidase"/>
</dbReference>
<dbReference type="InterPro" id="IPR036523">
    <property type="entry name" value="SurE-like_sf"/>
</dbReference>
<dbReference type="NCBIfam" id="NF001488">
    <property type="entry name" value="PRK00346.1-1"/>
    <property type="match status" value="1"/>
</dbReference>
<dbReference type="NCBIfam" id="NF001489">
    <property type="entry name" value="PRK00346.1-3"/>
    <property type="match status" value="1"/>
</dbReference>
<dbReference type="NCBIfam" id="NF001490">
    <property type="entry name" value="PRK00346.1-4"/>
    <property type="match status" value="1"/>
</dbReference>
<dbReference type="NCBIfam" id="TIGR00087">
    <property type="entry name" value="surE"/>
    <property type="match status" value="1"/>
</dbReference>
<dbReference type="PANTHER" id="PTHR30457">
    <property type="entry name" value="5'-NUCLEOTIDASE SURE"/>
    <property type="match status" value="1"/>
</dbReference>
<dbReference type="PANTHER" id="PTHR30457:SF12">
    <property type="entry name" value="5'_3'-NUCLEOTIDASE SURE"/>
    <property type="match status" value="1"/>
</dbReference>
<dbReference type="Pfam" id="PF01975">
    <property type="entry name" value="SurE"/>
    <property type="match status" value="1"/>
</dbReference>
<dbReference type="SUPFAM" id="SSF64167">
    <property type="entry name" value="SurE-like"/>
    <property type="match status" value="1"/>
</dbReference>
<keyword id="KW-0963">Cytoplasm</keyword>
<keyword id="KW-0378">Hydrolase</keyword>
<keyword id="KW-0479">Metal-binding</keyword>
<keyword id="KW-0547">Nucleotide-binding</keyword>
<keyword id="KW-1185">Reference proteome</keyword>
<protein>
    <recommendedName>
        <fullName evidence="1">5'/3'-nucleotidase SurE</fullName>
        <ecNumber evidence="1">3.1.3.5</ecNumber>
        <ecNumber evidence="1">3.1.3.6</ecNumber>
    </recommendedName>
    <alternativeName>
        <fullName evidence="1">Exopolyphosphatase</fullName>
        <ecNumber evidence="1">3.6.1.11</ecNumber>
    </alternativeName>
    <alternativeName>
        <fullName evidence="1">Nucleoside monophosphate phosphohydrolase</fullName>
    </alternativeName>
</protein>
<feature type="chain" id="PRO_1000196600" description="5'/3'-nucleotidase SurE">
    <location>
        <begin position="1"/>
        <end position="253"/>
    </location>
</feature>
<feature type="binding site" evidence="1">
    <location>
        <position position="8"/>
    </location>
    <ligand>
        <name>a divalent metal cation</name>
        <dbReference type="ChEBI" id="CHEBI:60240"/>
    </ligand>
</feature>
<feature type="binding site" evidence="1">
    <location>
        <position position="9"/>
    </location>
    <ligand>
        <name>a divalent metal cation</name>
        <dbReference type="ChEBI" id="CHEBI:60240"/>
    </ligand>
</feature>
<feature type="binding site" evidence="1">
    <location>
        <position position="39"/>
    </location>
    <ligand>
        <name>a divalent metal cation</name>
        <dbReference type="ChEBI" id="CHEBI:60240"/>
    </ligand>
</feature>
<feature type="binding site" evidence="1">
    <location>
        <position position="92"/>
    </location>
    <ligand>
        <name>a divalent metal cation</name>
        <dbReference type="ChEBI" id="CHEBI:60240"/>
    </ligand>
</feature>
<evidence type="ECO:0000255" key="1">
    <source>
        <dbReference type="HAMAP-Rule" id="MF_00060"/>
    </source>
</evidence>
<sequence length="253" mass="26900">MRILLSNDDGVHAPGIQTLAKALREFADVQVVAPDRNRSGASNSLTLESSLRTFTFENGDIAVQMGTPTDCVYLGVNALMRPRPDIVVSGINAGPNLGDDVIYSGTVAAAMEGRHLGFPALAVSLDGHKHYDTAAAVTCSILRALCKEPLRTGRILNINVPDLPLDQIKGIRVTRCGTRHPADQVIPQQDPRGNTLYWIGPPGGKCDAGPGTDFAAVDEGYVSITPLHVDLTAHSAQDVVSDWLNSVGVGTQW</sequence>
<accession>B7MKL8</accession>
<name>SURE_ECO45</name>